<sequence>MSLKLVEILVLGQVLRLNVPIEQEELLRQAARNLDILVSEMKEKTGLIQLDRVLSIVALNLSFELSQEKNKTAKIEEVLRTGIQQLDHSLENIRVTKEPH</sequence>
<name>ZAPA_HAEIN</name>
<gene>
    <name type="primary">zapA</name>
    <name type="ordered locus">HI_0857</name>
</gene>
<protein>
    <recommendedName>
        <fullName>Cell division protein ZapA</fullName>
    </recommendedName>
    <alternativeName>
        <fullName>Z ring-associated protein ZapA</fullName>
    </alternativeName>
</protein>
<keyword id="KW-0131">Cell cycle</keyword>
<keyword id="KW-0132">Cell division</keyword>
<keyword id="KW-0175">Coiled coil</keyword>
<keyword id="KW-0963">Cytoplasm</keyword>
<keyword id="KW-1185">Reference proteome</keyword>
<keyword id="KW-0717">Septation</keyword>
<comment type="function">
    <text evidence="1">Activator of cell division through the inhibition of FtsZ GTPase activity, therefore promoting FtsZ assembly into bundles of protofilaments necessary for the formation of the division Z ring. It is recruited early at mid-cell but it is not essential for cell division (By similarity).</text>
</comment>
<comment type="subunit">
    <text evidence="1">Homodimer. Interacts with FtsZ (By similarity).</text>
</comment>
<comment type="subcellular location">
    <subcellularLocation>
        <location evidence="1">Cytoplasm</location>
    </subcellularLocation>
    <text evidence="1">Localizes at mid-cell.</text>
</comment>
<comment type="similarity">
    <text evidence="3">Belongs to the ZapA family. Type 1 subfamily.</text>
</comment>
<evidence type="ECO:0000250" key="1"/>
<evidence type="ECO:0000255" key="2"/>
<evidence type="ECO:0000305" key="3"/>
<proteinExistence type="inferred from homology"/>
<accession>P44062</accession>
<dbReference type="EMBL" id="L42023">
    <property type="protein sequence ID" value="AAC22516.1"/>
    <property type="molecule type" value="Genomic_DNA"/>
</dbReference>
<dbReference type="PIR" id="H64014">
    <property type="entry name" value="H64014"/>
</dbReference>
<dbReference type="RefSeq" id="NP_439017.1">
    <property type="nucleotide sequence ID" value="NC_000907.1"/>
</dbReference>
<dbReference type="SMR" id="P44062"/>
<dbReference type="STRING" id="71421.HI_0857"/>
<dbReference type="EnsemblBacteria" id="AAC22516">
    <property type="protein sequence ID" value="AAC22516"/>
    <property type="gene ID" value="HI_0857"/>
</dbReference>
<dbReference type="KEGG" id="hin:HI_0857"/>
<dbReference type="PATRIC" id="fig|71421.8.peg.898"/>
<dbReference type="eggNOG" id="COG3027">
    <property type="taxonomic scope" value="Bacteria"/>
</dbReference>
<dbReference type="HOGENOM" id="CLU_116623_3_0_6"/>
<dbReference type="OrthoDB" id="5917174at2"/>
<dbReference type="PhylomeDB" id="P44062"/>
<dbReference type="BioCyc" id="HINF71421:G1GJ1-897-MONOMER"/>
<dbReference type="Proteomes" id="UP000000579">
    <property type="component" value="Chromosome"/>
</dbReference>
<dbReference type="GO" id="GO:0032153">
    <property type="term" value="C:cell division site"/>
    <property type="evidence" value="ECO:0000318"/>
    <property type="project" value="GO_Central"/>
</dbReference>
<dbReference type="GO" id="GO:0030428">
    <property type="term" value="C:cell septum"/>
    <property type="evidence" value="ECO:0000318"/>
    <property type="project" value="GO_Central"/>
</dbReference>
<dbReference type="GO" id="GO:0005829">
    <property type="term" value="C:cytosol"/>
    <property type="evidence" value="ECO:0000318"/>
    <property type="project" value="GO_Central"/>
</dbReference>
<dbReference type="GO" id="GO:0000917">
    <property type="term" value="P:division septum assembly"/>
    <property type="evidence" value="ECO:0000318"/>
    <property type="project" value="GO_Central"/>
</dbReference>
<dbReference type="GO" id="GO:0043093">
    <property type="term" value="P:FtsZ-dependent cytokinesis"/>
    <property type="evidence" value="ECO:0000318"/>
    <property type="project" value="GO_Central"/>
</dbReference>
<dbReference type="GO" id="GO:0000921">
    <property type="term" value="P:septin ring assembly"/>
    <property type="evidence" value="ECO:0000318"/>
    <property type="project" value="GO_Central"/>
</dbReference>
<dbReference type="Gene3D" id="3.30.160.880">
    <property type="entry name" value="Cell division protein ZapA protomer, N-terminal domain"/>
    <property type="match status" value="1"/>
</dbReference>
<dbReference type="InterPro" id="IPR007838">
    <property type="entry name" value="Cell_div_ZapA-like"/>
</dbReference>
<dbReference type="InterPro" id="IPR036192">
    <property type="entry name" value="Cell_div_ZapA-like_sf"/>
</dbReference>
<dbReference type="InterPro" id="IPR042233">
    <property type="entry name" value="Cell_div_ZapA_N"/>
</dbReference>
<dbReference type="PANTHER" id="PTHR34981">
    <property type="entry name" value="CELL DIVISION PROTEIN ZAPA"/>
    <property type="match status" value="1"/>
</dbReference>
<dbReference type="PANTHER" id="PTHR34981:SF1">
    <property type="entry name" value="CELL DIVISION PROTEIN ZAPA"/>
    <property type="match status" value="1"/>
</dbReference>
<dbReference type="Pfam" id="PF05164">
    <property type="entry name" value="ZapA"/>
    <property type="match status" value="1"/>
</dbReference>
<dbReference type="SUPFAM" id="SSF102829">
    <property type="entry name" value="Cell division protein ZapA-like"/>
    <property type="match status" value="1"/>
</dbReference>
<reference key="1">
    <citation type="journal article" date="1995" name="Science">
        <title>Whole-genome random sequencing and assembly of Haemophilus influenzae Rd.</title>
        <authorList>
            <person name="Fleischmann R.D."/>
            <person name="Adams M.D."/>
            <person name="White O."/>
            <person name="Clayton R.A."/>
            <person name="Kirkness E.F."/>
            <person name="Kerlavage A.R."/>
            <person name="Bult C.J."/>
            <person name="Tomb J.-F."/>
            <person name="Dougherty B.A."/>
            <person name="Merrick J.M."/>
            <person name="McKenney K."/>
            <person name="Sutton G.G."/>
            <person name="FitzHugh W."/>
            <person name="Fields C.A."/>
            <person name="Gocayne J.D."/>
            <person name="Scott J.D."/>
            <person name="Shirley R."/>
            <person name="Liu L.-I."/>
            <person name="Glodek A."/>
            <person name="Kelley J.M."/>
            <person name="Weidman J.F."/>
            <person name="Phillips C.A."/>
            <person name="Spriggs T."/>
            <person name="Hedblom E."/>
            <person name="Cotton M.D."/>
            <person name="Utterback T.R."/>
            <person name="Hanna M.C."/>
            <person name="Nguyen D.T."/>
            <person name="Saudek D.M."/>
            <person name="Brandon R.C."/>
            <person name="Fine L.D."/>
            <person name="Fritchman J.L."/>
            <person name="Fuhrmann J.L."/>
            <person name="Geoghagen N.S.M."/>
            <person name="Gnehm C.L."/>
            <person name="McDonald L.A."/>
            <person name="Small K.V."/>
            <person name="Fraser C.M."/>
            <person name="Smith H.O."/>
            <person name="Venter J.C."/>
        </authorList>
    </citation>
    <scope>NUCLEOTIDE SEQUENCE [LARGE SCALE GENOMIC DNA]</scope>
    <source>
        <strain>ATCC 51907 / DSM 11121 / KW20 / Rd</strain>
    </source>
</reference>
<feature type="chain" id="PRO_0000169354" description="Cell division protein ZapA">
    <location>
        <begin position="1"/>
        <end position="100"/>
    </location>
</feature>
<feature type="coiled-coil region" evidence="2">
    <location>
        <begin position="21"/>
        <end position="45"/>
    </location>
</feature>
<organism>
    <name type="scientific">Haemophilus influenzae (strain ATCC 51907 / DSM 11121 / KW20 / Rd)</name>
    <dbReference type="NCBI Taxonomy" id="71421"/>
    <lineage>
        <taxon>Bacteria</taxon>
        <taxon>Pseudomonadati</taxon>
        <taxon>Pseudomonadota</taxon>
        <taxon>Gammaproteobacteria</taxon>
        <taxon>Pasteurellales</taxon>
        <taxon>Pasteurellaceae</taxon>
        <taxon>Haemophilus</taxon>
    </lineage>
</organism>